<feature type="chain" id="PRO_0000235529" description="Aspartate--tRNA(Asp/Asn) ligase">
    <location>
        <begin position="1"/>
        <end position="594"/>
    </location>
</feature>
<feature type="region of interest" description="Aspartate" evidence="1">
    <location>
        <begin position="206"/>
        <end position="209"/>
    </location>
</feature>
<feature type="binding site" evidence="1">
    <location>
        <position position="182"/>
    </location>
    <ligand>
        <name>L-aspartate</name>
        <dbReference type="ChEBI" id="CHEBI:29991"/>
    </ligand>
</feature>
<feature type="binding site" evidence="1">
    <location>
        <begin position="228"/>
        <end position="230"/>
    </location>
    <ligand>
        <name>ATP</name>
        <dbReference type="ChEBI" id="CHEBI:30616"/>
    </ligand>
</feature>
<feature type="binding site" evidence="1">
    <location>
        <position position="228"/>
    </location>
    <ligand>
        <name>L-aspartate</name>
        <dbReference type="ChEBI" id="CHEBI:29991"/>
    </ligand>
</feature>
<feature type="binding site" evidence="1">
    <location>
        <position position="237"/>
    </location>
    <ligand>
        <name>ATP</name>
        <dbReference type="ChEBI" id="CHEBI:30616"/>
    </ligand>
</feature>
<feature type="binding site" evidence="1">
    <location>
        <position position="455"/>
    </location>
    <ligand>
        <name>L-aspartate</name>
        <dbReference type="ChEBI" id="CHEBI:29991"/>
    </ligand>
</feature>
<feature type="binding site" evidence="1">
    <location>
        <position position="489"/>
    </location>
    <ligand>
        <name>ATP</name>
        <dbReference type="ChEBI" id="CHEBI:30616"/>
    </ligand>
</feature>
<feature type="binding site" evidence="1">
    <location>
        <position position="496"/>
    </location>
    <ligand>
        <name>L-aspartate</name>
        <dbReference type="ChEBI" id="CHEBI:29991"/>
    </ligand>
</feature>
<feature type="binding site" evidence="1">
    <location>
        <begin position="541"/>
        <end position="544"/>
    </location>
    <ligand>
        <name>ATP</name>
        <dbReference type="ChEBI" id="CHEBI:30616"/>
    </ligand>
</feature>
<feature type="site" description="Important for tRNA non-discrimination" evidence="1">
    <location>
        <position position="38"/>
    </location>
</feature>
<feature type="site" description="Important for tRNA non-discrimination" evidence="1">
    <location>
        <position position="90"/>
    </location>
</feature>
<dbReference type="EC" id="6.1.1.23" evidence="1"/>
<dbReference type="EMBL" id="CP000148">
    <property type="protein sequence ID" value="ABB31591.1"/>
    <property type="molecule type" value="Genomic_DNA"/>
</dbReference>
<dbReference type="RefSeq" id="WP_004513151.1">
    <property type="nucleotide sequence ID" value="NC_007517.1"/>
</dbReference>
<dbReference type="SMR" id="Q39VY3"/>
<dbReference type="STRING" id="269799.Gmet_1357"/>
<dbReference type="KEGG" id="gme:Gmet_1357"/>
<dbReference type="eggNOG" id="COG0173">
    <property type="taxonomic scope" value="Bacteria"/>
</dbReference>
<dbReference type="HOGENOM" id="CLU_014330_3_2_7"/>
<dbReference type="Proteomes" id="UP000007073">
    <property type="component" value="Chromosome"/>
</dbReference>
<dbReference type="GO" id="GO:0005737">
    <property type="term" value="C:cytoplasm"/>
    <property type="evidence" value="ECO:0007669"/>
    <property type="project" value="UniProtKB-SubCell"/>
</dbReference>
<dbReference type="GO" id="GO:0004815">
    <property type="term" value="F:aspartate-tRNA ligase activity"/>
    <property type="evidence" value="ECO:0007669"/>
    <property type="project" value="UniProtKB-UniRule"/>
</dbReference>
<dbReference type="GO" id="GO:0050560">
    <property type="term" value="F:aspartate-tRNA(Asn) ligase activity"/>
    <property type="evidence" value="ECO:0007669"/>
    <property type="project" value="UniProtKB-EC"/>
</dbReference>
<dbReference type="GO" id="GO:0005524">
    <property type="term" value="F:ATP binding"/>
    <property type="evidence" value="ECO:0007669"/>
    <property type="project" value="UniProtKB-UniRule"/>
</dbReference>
<dbReference type="GO" id="GO:0003676">
    <property type="term" value="F:nucleic acid binding"/>
    <property type="evidence" value="ECO:0007669"/>
    <property type="project" value="InterPro"/>
</dbReference>
<dbReference type="GO" id="GO:0006422">
    <property type="term" value="P:aspartyl-tRNA aminoacylation"/>
    <property type="evidence" value="ECO:0007669"/>
    <property type="project" value="UniProtKB-UniRule"/>
</dbReference>
<dbReference type="CDD" id="cd00777">
    <property type="entry name" value="AspRS_core"/>
    <property type="match status" value="1"/>
</dbReference>
<dbReference type="CDD" id="cd04317">
    <property type="entry name" value="EcAspRS_like_N"/>
    <property type="match status" value="1"/>
</dbReference>
<dbReference type="Gene3D" id="3.30.930.10">
    <property type="entry name" value="Bira Bifunctional Protein, Domain 2"/>
    <property type="match status" value="1"/>
</dbReference>
<dbReference type="Gene3D" id="3.30.1360.30">
    <property type="entry name" value="GAD-like domain"/>
    <property type="match status" value="1"/>
</dbReference>
<dbReference type="Gene3D" id="2.40.50.140">
    <property type="entry name" value="Nucleic acid-binding proteins"/>
    <property type="match status" value="1"/>
</dbReference>
<dbReference type="HAMAP" id="MF_00044">
    <property type="entry name" value="Asp_tRNA_synth_type1"/>
    <property type="match status" value="1"/>
</dbReference>
<dbReference type="InterPro" id="IPR004364">
    <property type="entry name" value="Aa-tRNA-synt_II"/>
</dbReference>
<dbReference type="InterPro" id="IPR006195">
    <property type="entry name" value="aa-tRNA-synth_II"/>
</dbReference>
<dbReference type="InterPro" id="IPR045864">
    <property type="entry name" value="aa-tRNA-synth_II/BPL/LPL"/>
</dbReference>
<dbReference type="InterPro" id="IPR004524">
    <property type="entry name" value="Asp-tRNA-ligase_1"/>
</dbReference>
<dbReference type="InterPro" id="IPR047089">
    <property type="entry name" value="Asp-tRNA-ligase_1_N"/>
</dbReference>
<dbReference type="InterPro" id="IPR002312">
    <property type="entry name" value="Asp/Asn-tRNA-synth_IIb"/>
</dbReference>
<dbReference type="InterPro" id="IPR047090">
    <property type="entry name" value="AspRS_core"/>
</dbReference>
<dbReference type="InterPro" id="IPR004115">
    <property type="entry name" value="GAD-like_sf"/>
</dbReference>
<dbReference type="InterPro" id="IPR029351">
    <property type="entry name" value="GAD_dom"/>
</dbReference>
<dbReference type="InterPro" id="IPR012340">
    <property type="entry name" value="NA-bd_OB-fold"/>
</dbReference>
<dbReference type="InterPro" id="IPR004365">
    <property type="entry name" value="NA-bd_OB_tRNA"/>
</dbReference>
<dbReference type="NCBIfam" id="TIGR00459">
    <property type="entry name" value="aspS_bact"/>
    <property type="match status" value="1"/>
</dbReference>
<dbReference type="NCBIfam" id="NF001750">
    <property type="entry name" value="PRK00476.1"/>
    <property type="match status" value="1"/>
</dbReference>
<dbReference type="PANTHER" id="PTHR22594:SF5">
    <property type="entry name" value="ASPARTATE--TRNA LIGASE, MITOCHONDRIAL"/>
    <property type="match status" value="1"/>
</dbReference>
<dbReference type="PANTHER" id="PTHR22594">
    <property type="entry name" value="ASPARTYL/LYSYL-TRNA SYNTHETASE"/>
    <property type="match status" value="1"/>
</dbReference>
<dbReference type="Pfam" id="PF02938">
    <property type="entry name" value="GAD"/>
    <property type="match status" value="1"/>
</dbReference>
<dbReference type="Pfam" id="PF00152">
    <property type="entry name" value="tRNA-synt_2"/>
    <property type="match status" value="1"/>
</dbReference>
<dbReference type="Pfam" id="PF01336">
    <property type="entry name" value="tRNA_anti-codon"/>
    <property type="match status" value="1"/>
</dbReference>
<dbReference type="PRINTS" id="PR01042">
    <property type="entry name" value="TRNASYNTHASP"/>
</dbReference>
<dbReference type="SUPFAM" id="SSF55681">
    <property type="entry name" value="Class II aaRS and biotin synthetases"/>
    <property type="match status" value="1"/>
</dbReference>
<dbReference type="SUPFAM" id="SSF55261">
    <property type="entry name" value="GAD domain-like"/>
    <property type="match status" value="1"/>
</dbReference>
<dbReference type="SUPFAM" id="SSF50249">
    <property type="entry name" value="Nucleic acid-binding proteins"/>
    <property type="match status" value="1"/>
</dbReference>
<dbReference type="PROSITE" id="PS50862">
    <property type="entry name" value="AA_TRNA_LIGASE_II"/>
    <property type="match status" value="1"/>
</dbReference>
<reference key="1">
    <citation type="journal article" date="2009" name="BMC Microbiol.">
        <title>The genome sequence of Geobacter metallireducens: features of metabolism, physiology and regulation common and dissimilar to Geobacter sulfurreducens.</title>
        <authorList>
            <person name="Aklujkar M."/>
            <person name="Krushkal J."/>
            <person name="DiBartolo G."/>
            <person name="Lapidus A."/>
            <person name="Land M.L."/>
            <person name="Lovley D.R."/>
        </authorList>
    </citation>
    <scope>NUCLEOTIDE SEQUENCE [LARGE SCALE GENOMIC DNA]</scope>
    <source>
        <strain>ATCC 53774 / DSM 7210 / GS-15</strain>
    </source>
</reference>
<sequence>MEDILGEWKRSHYCGNLTKADVGREVILMGWILRRRDHGGLIFADLRDREGLAQIVFDPAKNTDAHHKAEAIRNEYVVAVKGEVIPRPEGTVNSAMKTGEVEVLVTECKILNRSKALPFTLDDYVDVAENIRLKYRYLDLRRPVLQQNLILRSMVAQITRQYLSENGFLEIETPFLTKSTPEGARDFLVPSRINQGNFYALPQSPQIFKQILMISGFDRYFQIVRCFRDEDLRADRQPEFTQIDCEMSFIDREDIISVMEGLIAKIFTVAKGVDVPLPMPRMTYAEAIRRFGVDNPDVRFGLELVELTDIVKGAGFKVFADVAASGGIIKGLNAKGCARFSRKEIDDLTEFAKIYGAKGLAYVKIEEGQWHSPIAKFFSAEEIATMNQAFGAEDGDLLLFVADKPKVVNDSLGKLRNHLAGILGLADKNTFRFVWITDFPLLEWDEDEKRWAAVHHPFTAPMDEDLEKVESDPGSCRAKAYDLVLNGNEIGGGSIRIHQQHVQSLMFSMLGLSDDETRAKFGFLLDALECGTPPHGGIAFGMDRLIMLLTGSDSIRDVIAFPKTQKGACLMSEAPSPVDAKQLRELALKVTVKQ</sequence>
<protein>
    <recommendedName>
        <fullName evidence="1">Aspartate--tRNA(Asp/Asn) ligase</fullName>
        <ecNumber evidence="1">6.1.1.23</ecNumber>
    </recommendedName>
    <alternativeName>
        <fullName evidence="1">Aspartyl-tRNA synthetase</fullName>
        <shortName evidence="1">AspRS</shortName>
    </alternativeName>
    <alternativeName>
        <fullName evidence="1">Non-discriminating aspartyl-tRNA synthetase</fullName>
        <shortName evidence="1">ND-AspRS</shortName>
    </alternativeName>
</protein>
<name>SYDND_GEOMG</name>
<gene>
    <name evidence="1" type="primary">aspS</name>
    <name type="ordered locus">Gmet_1357</name>
</gene>
<comment type="function">
    <text evidence="1">Aspartyl-tRNA synthetase with relaxed tRNA specificity since it is able to aspartylate not only its cognate tRNA(Asp) but also tRNA(Asn). Reaction proceeds in two steps: L-aspartate is first activated by ATP to form Asp-AMP and then transferred to the acceptor end of tRNA(Asp/Asn).</text>
</comment>
<comment type="catalytic activity">
    <reaction evidence="1">
        <text>tRNA(Asx) + L-aspartate + ATP = L-aspartyl-tRNA(Asx) + AMP + diphosphate</text>
        <dbReference type="Rhea" id="RHEA:18349"/>
        <dbReference type="Rhea" id="RHEA-COMP:9710"/>
        <dbReference type="Rhea" id="RHEA-COMP:9711"/>
        <dbReference type="ChEBI" id="CHEBI:29991"/>
        <dbReference type="ChEBI" id="CHEBI:30616"/>
        <dbReference type="ChEBI" id="CHEBI:33019"/>
        <dbReference type="ChEBI" id="CHEBI:78442"/>
        <dbReference type="ChEBI" id="CHEBI:78516"/>
        <dbReference type="ChEBI" id="CHEBI:456215"/>
        <dbReference type="EC" id="6.1.1.23"/>
    </reaction>
</comment>
<comment type="subunit">
    <text evidence="1">Homodimer.</text>
</comment>
<comment type="subcellular location">
    <subcellularLocation>
        <location evidence="1">Cytoplasm</location>
    </subcellularLocation>
</comment>
<comment type="similarity">
    <text evidence="1">Belongs to the class-II aminoacyl-tRNA synthetase family. Type 1 subfamily.</text>
</comment>
<keyword id="KW-0030">Aminoacyl-tRNA synthetase</keyword>
<keyword id="KW-0067">ATP-binding</keyword>
<keyword id="KW-0963">Cytoplasm</keyword>
<keyword id="KW-0436">Ligase</keyword>
<keyword id="KW-0547">Nucleotide-binding</keyword>
<keyword id="KW-0648">Protein biosynthesis</keyword>
<keyword id="KW-1185">Reference proteome</keyword>
<accession>Q39VY3</accession>
<proteinExistence type="inferred from homology"/>
<evidence type="ECO:0000255" key="1">
    <source>
        <dbReference type="HAMAP-Rule" id="MF_00044"/>
    </source>
</evidence>
<organism>
    <name type="scientific">Geobacter metallireducens (strain ATCC 53774 / DSM 7210 / GS-15)</name>
    <dbReference type="NCBI Taxonomy" id="269799"/>
    <lineage>
        <taxon>Bacteria</taxon>
        <taxon>Pseudomonadati</taxon>
        <taxon>Thermodesulfobacteriota</taxon>
        <taxon>Desulfuromonadia</taxon>
        <taxon>Geobacterales</taxon>
        <taxon>Geobacteraceae</taxon>
        <taxon>Geobacter</taxon>
    </lineage>
</organism>